<comment type="function">
    <text evidence="1">Excises uracil residues from the DNA which can arise as a result of misincorporation of dUMP residues by DNA polymerase or due to deamination of cytosine.</text>
</comment>
<comment type="catalytic activity">
    <reaction evidence="1">
        <text>Hydrolyzes single-stranded DNA or mismatched double-stranded DNA and polynucleotides, releasing free uracil.</text>
        <dbReference type="EC" id="3.2.2.27"/>
    </reaction>
</comment>
<comment type="subcellular location">
    <subcellularLocation>
        <location evidence="1">Cytoplasm</location>
    </subcellularLocation>
</comment>
<comment type="similarity">
    <text evidence="1">Belongs to the uracil-DNA glycosylase (UDG) superfamily. UNG family.</text>
</comment>
<dbReference type="EC" id="3.2.2.27" evidence="1"/>
<dbReference type="EMBL" id="AM946015">
    <property type="protein sequence ID" value="CAR42267.1"/>
    <property type="molecule type" value="Genomic_DNA"/>
</dbReference>
<dbReference type="RefSeq" id="WP_012658514.1">
    <property type="nucleotide sequence ID" value="NC_012004.1"/>
</dbReference>
<dbReference type="SMR" id="B9DSB9"/>
<dbReference type="STRING" id="218495.SUB1017"/>
<dbReference type="GeneID" id="93826294"/>
<dbReference type="KEGG" id="sub:SUB1017"/>
<dbReference type="eggNOG" id="COG0692">
    <property type="taxonomic scope" value="Bacteria"/>
</dbReference>
<dbReference type="HOGENOM" id="CLU_032162_3_1_9"/>
<dbReference type="OrthoDB" id="9804372at2"/>
<dbReference type="Proteomes" id="UP000000449">
    <property type="component" value="Chromosome"/>
</dbReference>
<dbReference type="GO" id="GO:0005737">
    <property type="term" value="C:cytoplasm"/>
    <property type="evidence" value="ECO:0007669"/>
    <property type="project" value="UniProtKB-SubCell"/>
</dbReference>
<dbReference type="GO" id="GO:0004844">
    <property type="term" value="F:uracil DNA N-glycosylase activity"/>
    <property type="evidence" value="ECO:0007669"/>
    <property type="project" value="UniProtKB-UniRule"/>
</dbReference>
<dbReference type="GO" id="GO:0097510">
    <property type="term" value="P:base-excision repair, AP site formation via deaminated base removal"/>
    <property type="evidence" value="ECO:0007669"/>
    <property type="project" value="TreeGrafter"/>
</dbReference>
<dbReference type="CDD" id="cd10027">
    <property type="entry name" value="UDG-F1-like"/>
    <property type="match status" value="1"/>
</dbReference>
<dbReference type="FunFam" id="3.40.470.10:FF:000008">
    <property type="entry name" value="Uracil-DNA glycosylase"/>
    <property type="match status" value="1"/>
</dbReference>
<dbReference type="Gene3D" id="3.40.470.10">
    <property type="entry name" value="Uracil-DNA glycosylase-like domain"/>
    <property type="match status" value="1"/>
</dbReference>
<dbReference type="HAMAP" id="MF_00148">
    <property type="entry name" value="UDG"/>
    <property type="match status" value="1"/>
</dbReference>
<dbReference type="InterPro" id="IPR002043">
    <property type="entry name" value="UDG_fam1"/>
</dbReference>
<dbReference type="InterPro" id="IPR018085">
    <property type="entry name" value="Ura-DNA_Glyclase_AS"/>
</dbReference>
<dbReference type="InterPro" id="IPR005122">
    <property type="entry name" value="Uracil-DNA_glycosylase-like"/>
</dbReference>
<dbReference type="InterPro" id="IPR036895">
    <property type="entry name" value="Uracil-DNA_glycosylase-like_sf"/>
</dbReference>
<dbReference type="NCBIfam" id="NF003588">
    <property type="entry name" value="PRK05254.1-1"/>
    <property type="match status" value="1"/>
</dbReference>
<dbReference type="NCBIfam" id="NF003589">
    <property type="entry name" value="PRK05254.1-2"/>
    <property type="match status" value="1"/>
</dbReference>
<dbReference type="NCBIfam" id="NF003591">
    <property type="entry name" value="PRK05254.1-4"/>
    <property type="match status" value="1"/>
</dbReference>
<dbReference type="NCBIfam" id="NF003592">
    <property type="entry name" value="PRK05254.1-5"/>
    <property type="match status" value="1"/>
</dbReference>
<dbReference type="NCBIfam" id="TIGR00628">
    <property type="entry name" value="ung"/>
    <property type="match status" value="1"/>
</dbReference>
<dbReference type="PANTHER" id="PTHR11264">
    <property type="entry name" value="URACIL-DNA GLYCOSYLASE"/>
    <property type="match status" value="1"/>
</dbReference>
<dbReference type="PANTHER" id="PTHR11264:SF0">
    <property type="entry name" value="URACIL-DNA GLYCOSYLASE"/>
    <property type="match status" value="1"/>
</dbReference>
<dbReference type="Pfam" id="PF03167">
    <property type="entry name" value="UDG"/>
    <property type="match status" value="1"/>
</dbReference>
<dbReference type="SMART" id="SM00986">
    <property type="entry name" value="UDG"/>
    <property type="match status" value="1"/>
</dbReference>
<dbReference type="SMART" id="SM00987">
    <property type="entry name" value="UreE_C"/>
    <property type="match status" value="1"/>
</dbReference>
<dbReference type="SUPFAM" id="SSF52141">
    <property type="entry name" value="Uracil-DNA glycosylase-like"/>
    <property type="match status" value="1"/>
</dbReference>
<dbReference type="PROSITE" id="PS00130">
    <property type="entry name" value="U_DNA_GLYCOSYLASE"/>
    <property type="match status" value="1"/>
</dbReference>
<name>UNG_STRU0</name>
<feature type="chain" id="PRO_1000199801" description="Uracil-DNA glycosylase">
    <location>
        <begin position="1"/>
        <end position="217"/>
    </location>
</feature>
<feature type="active site" description="Proton acceptor" evidence="1">
    <location>
        <position position="62"/>
    </location>
</feature>
<evidence type="ECO:0000255" key="1">
    <source>
        <dbReference type="HAMAP-Rule" id="MF_00148"/>
    </source>
</evidence>
<reference key="1">
    <citation type="journal article" date="2009" name="BMC Genomics">
        <title>Evidence for niche adaptation in the genome of the bovine pathogen Streptococcus uberis.</title>
        <authorList>
            <person name="Ward P.N."/>
            <person name="Holden M.T.G."/>
            <person name="Leigh J.A."/>
            <person name="Lennard N."/>
            <person name="Bignell A."/>
            <person name="Barron A."/>
            <person name="Clark L."/>
            <person name="Quail M.A."/>
            <person name="Woodward J."/>
            <person name="Barrell B.G."/>
            <person name="Egan S.A."/>
            <person name="Field T.R."/>
            <person name="Maskell D."/>
            <person name="Kehoe M."/>
            <person name="Dowson C.G."/>
            <person name="Chanter N."/>
            <person name="Whatmore A.M."/>
            <person name="Bentley S.D."/>
            <person name="Parkhill J."/>
        </authorList>
    </citation>
    <scope>NUCLEOTIDE SEQUENCE [LARGE SCALE GENOMIC DNA]</scope>
    <source>
        <strain>ATCC BAA-854 / 0140J</strain>
    </source>
</reference>
<protein>
    <recommendedName>
        <fullName evidence="1">Uracil-DNA glycosylase</fullName>
        <shortName evidence="1">UDG</shortName>
        <ecNumber evidence="1">3.2.2.27</ecNumber>
    </recommendedName>
</protein>
<sequence length="217" mass="24549">MEHSTWHRKIKESLPPDYFARINQFLDQVYSQGRVYPKREHIFKALTETPYEDLKVLILGQDPYHGPGQAQGLSFSVPDSIAAPPSLQNILKELSEDIGKRDHHDLTSWAKQGVLLLNACLTVPEHQANAHAGLIWEPFTDAVIQLANAKESPVVFILWGGFARKKKAFITNPKHLVIESAHPSPLSAYRGFFGSRPFSKCNAFLKENQLEPIDWLQ</sequence>
<organism>
    <name type="scientific">Streptococcus uberis (strain ATCC BAA-854 / 0140J)</name>
    <dbReference type="NCBI Taxonomy" id="218495"/>
    <lineage>
        <taxon>Bacteria</taxon>
        <taxon>Bacillati</taxon>
        <taxon>Bacillota</taxon>
        <taxon>Bacilli</taxon>
        <taxon>Lactobacillales</taxon>
        <taxon>Streptococcaceae</taxon>
        <taxon>Streptococcus</taxon>
    </lineage>
</organism>
<gene>
    <name evidence="1" type="primary">ung</name>
    <name type="ordered locus">SUB1017</name>
</gene>
<accession>B9DSB9</accession>
<keyword id="KW-0963">Cytoplasm</keyword>
<keyword id="KW-0227">DNA damage</keyword>
<keyword id="KW-0234">DNA repair</keyword>
<keyword id="KW-0378">Hydrolase</keyword>
<keyword id="KW-1185">Reference proteome</keyword>
<proteinExistence type="inferred from homology"/>